<evidence type="ECO:0000250" key="1">
    <source>
        <dbReference type="UniProtKB" id="Q91XE0"/>
    </source>
</evidence>
<evidence type="ECO:0000269" key="2">
    <source>
    </source>
</evidence>
<evidence type="ECO:0000269" key="3">
    <source>
    </source>
</evidence>
<evidence type="ECO:0000269" key="4">
    <source>
    </source>
</evidence>
<evidence type="ECO:0000303" key="5">
    <source>
    </source>
</evidence>
<evidence type="ECO:0000303" key="6">
    <source>
    </source>
</evidence>
<evidence type="ECO:0000303" key="7">
    <source>
    </source>
</evidence>
<evidence type="ECO:0000303" key="8">
    <source>
    </source>
</evidence>
<evidence type="ECO:0000305" key="9"/>
<evidence type="ECO:0007829" key="10">
    <source>
        <dbReference type="PDB" id="7PK1"/>
    </source>
</evidence>
<evidence type="ECO:0007829" key="11">
    <source>
        <dbReference type="PDB" id="7PK2"/>
    </source>
</evidence>
<feature type="chain" id="PRO_0000281868" description="Glycine N-acyltransferase">
    <location>
        <begin position="1"/>
        <end position="295"/>
    </location>
</feature>
<feature type="modified residue" description="N6-acetyllysine; alternate" evidence="1">
    <location>
        <position position="15"/>
    </location>
</feature>
<feature type="modified residue" description="N6-succinyllysine; alternate" evidence="1">
    <location>
        <position position="15"/>
    </location>
</feature>
<feature type="modified residue" description="N6-acetyllysine; alternate" evidence="1">
    <location>
        <position position="126"/>
    </location>
</feature>
<feature type="modified residue" description="N6-succinyllysine; alternate" evidence="1">
    <location>
        <position position="126"/>
    </location>
</feature>
<feature type="modified residue" description="N6-acetyllysine; alternate" evidence="1">
    <location>
        <position position="140"/>
    </location>
</feature>
<feature type="modified residue" description="N6-succinyllysine; alternate" evidence="1">
    <location>
        <position position="140"/>
    </location>
</feature>
<feature type="modified residue" description="N6-acetyllysine" evidence="1">
    <location>
        <position position="158"/>
    </location>
</feature>
<feature type="modified residue" description="N6-succinyllysine" evidence="1">
    <location>
        <position position="168"/>
    </location>
</feature>
<feature type="modified residue" description="N6-acetyllysine; alternate" evidence="1">
    <location>
        <position position="255"/>
    </location>
</feature>
<feature type="modified residue" description="N6-succinyllysine; alternate" evidence="1">
    <location>
        <position position="255"/>
    </location>
</feature>
<feature type="sequence conflict" description="In Ref. 3; AA sequence." evidence="9" ref="3">
    <original>C</original>
    <variation>G</variation>
    <location>
        <position position="85"/>
    </location>
</feature>
<feature type="sequence conflict" description="In Ref. 1; AAC09302/CAA11242." evidence="9" ref="1">
    <original>T</original>
    <variation>P</variation>
    <location>
        <position position="211"/>
    </location>
</feature>
<feature type="helix" evidence="11">
    <location>
        <begin position="7"/>
        <end position="18"/>
    </location>
</feature>
<feature type="turn" evidence="11">
    <location>
        <begin position="19"/>
        <end position="24"/>
    </location>
</feature>
<feature type="helix" evidence="11">
    <location>
        <begin position="25"/>
        <end position="34"/>
    </location>
</feature>
<feature type="turn" evidence="11">
    <location>
        <begin position="35"/>
        <end position="37"/>
    </location>
</feature>
<feature type="strand" evidence="11">
    <location>
        <begin position="42"/>
        <end position="51"/>
    </location>
</feature>
<feature type="strand" evidence="11">
    <location>
        <begin position="53"/>
        <end position="59"/>
    </location>
</feature>
<feature type="helix" evidence="11">
    <location>
        <begin position="61"/>
        <end position="63"/>
    </location>
</feature>
<feature type="turn" evidence="11">
    <location>
        <begin position="70"/>
        <end position="72"/>
    </location>
</feature>
<feature type="strand" evidence="11">
    <location>
        <begin position="73"/>
        <end position="80"/>
    </location>
</feature>
<feature type="helix" evidence="11">
    <location>
        <begin position="82"/>
        <end position="89"/>
    </location>
</feature>
<feature type="turn" evidence="11">
    <location>
        <begin position="92"/>
        <end position="94"/>
    </location>
</feature>
<feature type="strand" evidence="11">
    <location>
        <begin position="101"/>
        <end position="106"/>
    </location>
</feature>
<feature type="helix" evidence="11">
    <location>
        <begin position="110"/>
        <end position="121"/>
    </location>
</feature>
<feature type="strand" evidence="11">
    <location>
        <begin position="123"/>
        <end position="135"/>
    </location>
</feature>
<feature type="helix" evidence="11">
    <location>
        <begin position="136"/>
        <end position="142"/>
    </location>
</feature>
<feature type="helix" evidence="10">
    <location>
        <begin position="144"/>
        <end position="146"/>
    </location>
</feature>
<feature type="turn" evidence="11">
    <location>
        <begin position="164"/>
        <end position="166"/>
    </location>
</feature>
<feature type="strand" evidence="11">
    <location>
        <begin position="168"/>
        <end position="170"/>
    </location>
</feature>
<feature type="helix" evidence="11">
    <location>
        <begin position="174"/>
        <end position="176"/>
    </location>
</feature>
<feature type="helix" evidence="11">
    <location>
        <begin position="177"/>
        <end position="183"/>
    </location>
</feature>
<feature type="helix" evidence="11">
    <location>
        <begin position="190"/>
        <end position="202"/>
    </location>
</feature>
<feature type="strand" evidence="11">
    <location>
        <begin position="206"/>
        <end position="209"/>
    </location>
</feature>
<feature type="strand" evidence="11">
    <location>
        <begin position="213"/>
        <end position="221"/>
    </location>
</feature>
<feature type="strand" evidence="11">
    <location>
        <begin position="227"/>
        <end position="232"/>
    </location>
</feature>
<feature type="helix" evidence="11">
    <location>
        <begin position="234"/>
        <end position="236"/>
    </location>
</feature>
<feature type="strand" evidence="10">
    <location>
        <begin position="238"/>
        <end position="240"/>
    </location>
</feature>
<feature type="helix" evidence="11">
    <location>
        <begin position="241"/>
        <end position="255"/>
    </location>
</feature>
<feature type="strand" evidence="11">
    <location>
        <begin position="261"/>
        <end position="264"/>
    </location>
</feature>
<feature type="helix" evidence="11">
    <location>
        <begin position="269"/>
        <end position="277"/>
    </location>
</feature>
<feature type="strand" evidence="11">
    <location>
        <begin position="280"/>
        <end position="294"/>
    </location>
</feature>
<comment type="function">
    <text evidence="4">Mitochondrial acyltransferase which transfers an acyl group to the N-terminus of glycine and glutamine, although much less efficiently. Can conjugate a multitude of substrates to form a variety of N-acylglycines, thereby detoxify xenobiotics, such as benzoic acid or salicylic acid, and endogenous organic acids, such as isovaleric acid.</text>
</comment>
<comment type="catalytic activity">
    <reaction evidence="2 3 4">
        <text>an acyl-CoA + glycine = an N-acylglycine + CoA + H(+)</text>
        <dbReference type="Rhea" id="RHEA:19869"/>
        <dbReference type="ChEBI" id="CHEBI:15378"/>
        <dbReference type="ChEBI" id="CHEBI:57287"/>
        <dbReference type="ChEBI" id="CHEBI:57305"/>
        <dbReference type="ChEBI" id="CHEBI:57670"/>
        <dbReference type="ChEBI" id="CHEBI:58342"/>
        <dbReference type="EC" id="2.3.1.13"/>
    </reaction>
</comment>
<comment type="catalytic activity">
    <reaction evidence="2 3 4">
        <text>benzoyl-CoA + glycine = N-benzoylglycine + CoA + H(+)</text>
        <dbReference type="Rhea" id="RHEA:18493"/>
        <dbReference type="ChEBI" id="CHEBI:15378"/>
        <dbReference type="ChEBI" id="CHEBI:57287"/>
        <dbReference type="ChEBI" id="CHEBI:57305"/>
        <dbReference type="ChEBI" id="CHEBI:57369"/>
        <dbReference type="ChEBI" id="CHEBI:606565"/>
        <dbReference type="EC" id="2.3.1.71"/>
    </reaction>
</comment>
<comment type="subcellular location">
    <subcellularLocation>
        <location evidence="2 4">Mitochondrion</location>
    </subcellularLocation>
</comment>
<comment type="tissue specificity">
    <text evidence="3 4">Detected in liver (at protein level).</text>
</comment>
<comment type="similarity">
    <text evidence="9">Belongs to the glycine N-acyltransferase family.</text>
</comment>
<comment type="sequence caution" evidence="9">
    <conflict type="erroneous initiation">
        <sequence resource="EMBL-CDS" id="AAI12537"/>
    </conflict>
    <text>Extended N-terminus.</text>
</comment>
<name>GLYAT_BOVIN</name>
<keyword id="KW-0002">3D-structure</keyword>
<keyword id="KW-0007">Acetylation</keyword>
<keyword id="KW-0012">Acyltransferase</keyword>
<keyword id="KW-0216">Detoxification</keyword>
<keyword id="KW-0903">Direct protein sequencing</keyword>
<keyword id="KW-0496">Mitochondrion</keyword>
<keyword id="KW-1185">Reference proteome</keyword>
<keyword id="KW-0808">Transferase</keyword>
<sequence>MFLLQGAQMLQMLEKSLRKSLPMSLKVYGTVMHMNHGNPFNLKALVDKWPDFQTVVIRPQEQDMKDDLDHYTNTYHVYSEDLKNCQEFLDLPEVINWKQHLQIQSTQSSLNEVIQNLAATKSFKVKRSKNILYMASETIKELTPSLLDVKNLPVGDGKPKAIDPEMFKLSSVDPSHAAVVNRFWLFGGNERSLRFIERCIQSFPNFCLLGTEGTPVSWSLMDQTGEMRMAGTLPEYRAQGLVTHAIYQQAQCLLKRGFPVYSHVDPKNQIMQKMSQSLNHVPMPSDWNQWNCEPL</sequence>
<accession>Q2KIR7</accession>
<accession>O46686</accession>
<organism>
    <name type="scientific">Bos taurus</name>
    <name type="common">Bovine</name>
    <dbReference type="NCBI Taxonomy" id="9913"/>
    <lineage>
        <taxon>Eukaryota</taxon>
        <taxon>Metazoa</taxon>
        <taxon>Chordata</taxon>
        <taxon>Craniata</taxon>
        <taxon>Vertebrata</taxon>
        <taxon>Euteleostomi</taxon>
        <taxon>Mammalia</taxon>
        <taxon>Eutheria</taxon>
        <taxon>Laurasiatheria</taxon>
        <taxon>Artiodactyla</taxon>
        <taxon>Ruminantia</taxon>
        <taxon>Pecora</taxon>
        <taxon>Bovidae</taxon>
        <taxon>Bovinae</taxon>
        <taxon>Bos</taxon>
    </lineage>
</organism>
<proteinExistence type="evidence at protein level"/>
<protein>
    <recommendedName>
        <fullName evidence="6">Glycine N-acyltransferase</fullName>
        <ecNumber evidence="2 3 4">2.3.1.13</ecNumber>
    </recommendedName>
    <alternativeName>
        <fullName>Acyl-CoA:glycine N-acyltransferase</fullName>
        <shortName>AAc</shortName>
    </alternativeName>
    <alternativeName>
        <fullName evidence="5">Aralkyl acyl-CoA N-acyltransferase</fullName>
    </alternativeName>
    <alternativeName>
        <fullName evidence="8">Aralkyl acyl-CoA:amino acid N-acyltransferase</fullName>
    </alternativeName>
    <alternativeName>
        <fullName evidence="7">Benzoyl-coenzyme A:glycine N-acyltransferase</fullName>
    </alternativeName>
    <alternativeName>
        <fullName>Glycine N-benzoyltransferase</fullName>
        <ecNumber evidence="2 3 4">2.3.1.71</ecNumber>
    </alternativeName>
</protein>
<reference key="1">
    <citation type="journal article" date="1996" name="J. Biochem. Toxicol.">
        <title>Determination of the sequence of the aralkyl acyl-CoA:amino acid N-acyltransferase from bovine liver mitochondria.</title>
        <authorList>
            <person name="Vessey D.A."/>
            <person name="Lau E."/>
        </authorList>
    </citation>
    <scope>NUCLEOTIDE SEQUENCE [MRNA]</scope>
    <source>
        <tissue>Liver</tissue>
    </source>
</reference>
<reference key="2">
    <citation type="submission" date="2006-01" db="EMBL/GenBank/DDBJ databases">
        <authorList>
            <consortium name="NIH - Mammalian Gene Collection (MGC) project"/>
        </authorList>
    </citation>
    <scope>NUCLEOTIDE SEQUENCE [LARGE SCALE MRNA]</scope>
    <source>
        <strain>Hereford</strain>
        <tissue>Testis</tissue>
    </source>
</reference>
<reference key="3">
    <citation type="journal article" date="1992" name="Biochem. J.">
        <title>Structural comparison between the mitochondrial aralkyl-CoA and arylacetyl-CoA N-acyltransferases.</title>
        <authorList>
            <person name="Kelley M."/>
            <person name="Vessey D.A."/>
        </authorList>
    </citation>
    <scope>PROTEIN SEQUENCE OF 1-15 AND 64-89</scope>
    <scope>CATALYTIC ACTIVITY</scope>
    <scope>SUBCELLULAR LOCATION</scope>
    <source>
        <tissue>Liver</tissue>
    </source>
</reference>
<reference key="4">
    <citation type="journal article" date="1979" name="J. Biol. Chem.">
        <title>Benzoyl-coenzyme A:glycine N-acyltransferase and phenylacetyl-coenzyme A:glycine N-acyltransferase from bovine liver mitochondria. Purification and characterization.</title>
        <authorList>
            <person name="Nandi D.L."/>
            <person name="Lucas S.V."/>
            <person name="Webster L.T. Jr."/>
        </authorList>
    </citation>
    <scope>CATALYTIC ACTIVITY</scope>
    <scope>FUNCTION</scope>
    <scope>SUBCELLULAR LOCATION</scope>
    <scope>TISSUE SPECIFICITY</scope>
</reference>
<reference key="5">
    <citation type="journal article" date="2012" name="Drug Metab. Dispos.">
        <title>Enzymatic characterization and elucidation of the catalytic mechanism of a recombinant bovine glycine N-acyltransferase.</title>
        <authorList>
            <person name="Badenhorst C.P."/>
            <person name="Jooste M."/>
            <person name="van Dijk A.A."/>
        </authorList>
    </citation>
    <scope>CATALYTIC ACTIVITY</scope>
    <scope>TISSUE SPECIFICITY</scope>
</reference>
<gene>
    <name type="primary">GLYAT</name>
</gene>
<dbReference type="EC" id="2.3.1.13" evidence="2 3 4"/>
<dbReference type="EC" id="2.3.1.71" evidence="2 3 4"/>
<dbReference type="EMBL" id="AF045032">
    <property type="protein sequence ID" value="AAC09302.1"/>
    <property type="molecule type" value="mRNA"/>
</dbReference>
<dbReference type="EMBL" id="AJ223301">
    <property type="protein sequence ID" value="CAA11242.1"/>
    <property type="molecule type" value="mRNA"/>
</dbReference>
<dbReference type="EMBL" id="BC112536">
    <property type="protein sequence ID" value="AAI12537.1"/>
    <property type="status" value="ALT_INIT"/>
    <property type="molecule type" value="mRNA"/>
</dbReference>
<dbReference type="RefSeq" id="NP_803479.1">
    <property type="nucleotide sequence ID" value="NM_177513.2"/>
</dbReference>
<dbReference type="PDB" id="7PK0">
    <property type="method" value="X-ray"/>
    <property type="resolution" value="1.50 A"/>
    <property type="chains" value="A=1-295"/>
</dbReference>
<dbReference type="PDB" id="7PK1">
    <property type="method" value="X-ray"/>
    <property type="resolution" value="1.65 A"/>
    <property type="chains" value="A/B=1-295"/>
</dbReference>
<dbReference type="PDB" id="7PK2">
    <property type="method" value="X-ray"/>
    <property type="resolution" value="1.25 A"/>
    <property type="chains" value="A/B=1-295"/>
</dbReference>
<dbReference type="PDBsum" id="7PK0"/>
<dbReference type="PDBsum" id="7PK1"/>
<dbReference type="PDBsum" id="7PK2"/>
<dbReference type="SMR" id="Q2KIR7"/>
<dbReference type="FunCoup" id="Q2KIR7">
    <property type="interactions" value="76"/>
</dbReference>
<dbReference type="STRING" id="9913.ENSBTAP00000073772"/>
<dbReference type="PaxDb" id="9913-ENSBTAP00000006079"/>
<dbReference type="PeptideAtlas" id="Q2KIR7"/>
<dbReference type="GeneID" id="281787"/>
<dbReference type="KEGG" id="bta:281787"/>
<dbReference type="CTD" id="10249"/>
<dbReference type="eggNOG" id="ENOG502SDQB">
    <property type="taxonomic scope" value="Eukaryota"/>
</dbReference>
<dbReference type="InParanoid" id="Q2KIR7"/>
<dbReference type="OrthoDB" id="61870at2759"/>
<dbReference type="BRENDA" id="2.3.1.13">
    <property type="organism ID" value="908"/>
</dbReference>
<dbReference type="BRENDA" id="2.3.1.71">
    <property type="organism ID" value="908"/>
</dbReference>
<dbReference type="Proteomes" id="UP000009136">
    <property type="component" value="Unplaced"/>
</dbReference>
<dbReference type="GO" id="GO:0005739">
    <property type="term" value="C:mitochondrion"/>
    <property type="evidence" value="ECO:0000314"/>
    <property type="project" value="UniProtKB"/>
</dbReference>
<dbReference type="GO" id="GO:0047961">
    <property type="term" value="F:glycine N-acyltransferase activity"/>
    <property type="evidence" value="ECO:0000318"/>
    <property type="project" value="GO_Central"/>
</dbReference>
<dbReference type="GO" id="GO:0047962">
    <property type="term" value="F:glycine N-benzoyltransferase activity"/>
    <property type="evidence" value="ECO:0000314"/>
    <property type="project" value="UniProtKB"/>
</dbReference>
<dbReference type="GO" id="GO:0006544">
    <property type="term" value="P:glycine metabolic process"/>
    <property type="evidence" value="ECO:0000314"/>
    <property type="project" value="UniProtKB"/>
</dbReference>
<dbReference type="GO" id="GO:0032787">
    <property type="term" value="P:monocarboxylic acid metabolic process"/>
    <property type="evidence" value="ECO:0000314"/>
    <property type="project" value="UniProtKB"/>
</dbReference>
<dbReference type="GO" id="GO:0009636">
    <property type="term" value="P:response to toxic substance"/>
    <property type="evidence" value="ECO:0007669"/>
    <property type="project" value="UniProtKB-KW"/>
</dbReference>
<dbReference type="FunFam" id="3.40.630.30:FF:000075">
    <property type="entry name" value="Glycine N-acyltransferase"/>
    <property type="match status" value="1"/>
</dbReference>
<dbReference type="Gene3D" id="3.40.630.30">
    <property type="match status" value="1"/>
</dbReference>
<dbReference type="InterPro" id="IPR016181">
    <property type="entry name" value="Acyl_CoA_acyltransferase"/>
</dbReference>
<dbReference type="InterPro" id="IPR010313">
    <property type="entry name" value="Glycine_N-acyltransferase"/>
</dbReference>
<dbReference type="InterPro" id="IPR013652">
    <property type="entry name" value="Glycine_N-acyltransferase_C"/>
</dbReference>
<dbReference type="InterPro" id="IPR015938">
    <property type="entry name" value="Glycine_N-acyltransferase_N"/>
</dbReference>
<dbReference type="PANTHER" id="PTHR15298:SF9">
    <property type="entry name" value="GLYCINE N-ACYLTRANSFERASE"/>
    <property type="match status" value="1"/>
</dbReference>
<dbReference type="PANTHER" id="PTHR15298">
    <property type="entry name" value="L-COA N-ACYLTRANSFERASE-RELATED"/>
    <property type="match status" value="1"/>
</dbReference>
<dbReference type="Pfam" id="PF08444">
    <property type="entry name" value="Gly_acyl_tr_C"/>
    <property type="match status" value="1"/>
</dbReference>
<dbReference type="Pfam" id="PF06021">
    <property type="entry name" value="Gly_acyl_tr_N"/>
    <property type="match status" value="1"/>
</dbReference>
<dbReference type="SUPFAM" id="SSF55729">
    <property type="entry name" value="Acyl-CoA N-acyltransferases (Nat)"/>
    <property type="match status" value="1"/>
</dbReference>